<protein>
    <recommendedName>
        <fullName>SPbeta prophage-derived uncharacterized protein YoqT</fullName>
    </recommendedName>
</protein>
<feature type="chain" id="PRO_0000360476" description="SPbeta prophage-derived uncharacterized protein YoqT">
    <location>
        <begin position="1"/>
        <end position="49"/>
    </location>
</feature>
<feature type="transmembrane region" description="Helical" evidence="1">
    <location>
        <begin position="7"/>
        <end position="29"/>
    </location>
</feature>
<keyword id="KW-1003">Cell membrane</keyword>
<keyword id="KW-0472">Membrane</keyword>
<keyword id="KW-1185">Reference proteome</keyword>
<keyword id="KW-0812">Transmembrane</keyword>
<keyword id="KW-1133">Transmembrane helix</keyword>
<evidence type="ECO:0000255" key="1"/>
<evidence type="ECO:0000305" key="2"/>
<dbReference type="EMBL" id="AL009126">
    <property type="protein sequence ID" value="CAB13944.1"/>
    <property type="molecule type" value="Genomic_DNA"/>
</dbReference>
<dbReference type="RefSeq" id="NP_389934.1">
    <property type="nucleotide sequence ID" value="NC_000964.3"/>
</dbReference>
<dbReference type="RefSeq" id="WP_004399538.1">
    <property type="nucleotide sequence ID" value="NZ_OZ025638.1"/>
</dbReference>
<dbReference type="SMR" id="O31919"/>
<dbReference type="FunCoup" id="O31919">
    <property type="interactions" value="63"/>
</dbReference>
<dbReference type="PaxDb" id="224308-BSU20520"/>
<dbReference type="EnsemblBacteria" id="CAB13944">
    <property type="protein sequence ID" value="CAB13944"/>
    <property type="gene ID" value="BSU_20520"/>
</dbReference>
<dbReference type="GeneID" id="939616"/>
<dbReference type="KEGG" id="bsu:BSU20520"/>
<dbReference type="PATRIC" id="fig|224308.179.peg.2242"/>
<dbReference type="InParanoid" id="O31919"/>
<dbReference type="OrthoDB" id="9860377at2"/>
<dbReference type="BioCyc" id="BSUB:BSU20520-MONOMER"/>
<dbReference type="Proteomes" id="UP000001570">
    <property type="component" value="Chromosome"/>
</dbReference>
<dbReference type="GO" id="GO:0005886">
    <property type="term" value="C:plasma membrane"/>
    <property type="evidence" value="ECO:0007669"/>
    <property type="project" value="UniProtKB-SubCell"/>
</dbReference>
<name>YOQT_BACSU</name>
<accession>O31919</accession>
<gene>
    <name type="primary">yoqT</name>
    <name type="ordered locus">BSU20520</name>
</gene>
<comment type="subcellular location">
    <subcellularLocation>
        <location evidence="2">Cell membrane</location>
        <topology evidence="2">Single-pass membrane protein</topology>
    </subcellularLocation>
</comment>
<proteinExistence type="predicted"/>
<sequence>MELILDCFVNWSFDKIMDYILIAGLYFVFKSKSKQNYPDHFEEKRRHRN</sequence>
<reference key="1">
    <citation type="journal article" date="1997" name="Nature">
        <title>The complete genome sequence of the Gram-positive bacterium Bacillus subtilis.</title>
        <authorList>
            <person name="Kunst F."/>
            <person name="Ogasawara N."/>
            <person name="Moszer I."/>
            <person name="Albertini A.M."/>
            <person name="Alloni G."/>
            <person name="Azevedo V."/>
            <person name="Bertero M.G."/>
            <person name="Bessieres P."/>
            <person name="Bolotin A."/>
            <person name="Borchert S."/>
            <person name="Borriss R."/>
            <person name="Boursier L."/>
            <person name="Brans A."/>
            <person name="Braun M."/>
            <person name="Brignell S.C."/>
            <person name="Bron S."/>
            <person name="Brouillet S."/>
            <person name="Bruschi C.V."/>
            <person name="Caldwell B."/>
            <person name="Capuano V."/>
            <person name="Carter N.M."/>
            <person name="Choi S.-K."/>
            <person name="Codani J.-J."/>
            <person name="Connerton I.F."/>
            <person name="Cummings N.J."/>
            <person name="Daniel R.A."/>
            <person name="Denizot F."/>
            <person name="Devine K.M."/>
            <person name="Duesterhoeft A."/>
            <person name="Ehrlich S.D."/>
            <person name="Emmerson P.T."/>
            <person name="Entian K.-D."/>
            <person name="Errington J."/>
            <person name="Fabret C."/>
            <person name="Ferrari E."/>
            <person name="Foulger D."/>
            <person name="Fritz C."/>
            <person name="Fujita M."/>
            <person name="Fujita Y."/>
            <person name="Fuma S."/>
            <person name="Galizzi A."/>
            <person name="Galleron N."/>
            <person name="Ghim S.-Y."/>
            <person name="Glaser P."/>
            <person name="Goffeau A."/>
            <person name="Golightly E.J."/>
            <person name="Grandi G."/>
            <person name="Guiseppi G."/>
            <person name="Guy B.J."/>
            <person name="Haga K."/>
            <person name="Haiech J."/>
            <person name="Harwood C.R."/>
            <person name="Henaut A."/>
            <person name="Hilbert H."/>
            <person name="Holsappel S."/>
            <person name="Hosono S."/>
            <person name="Hullo M.-F."/>
            <person name="Itaya M."/>
            <person name="Jones L.-M."/>
            <person name="Joris B."/>
            <person name="Karamata D."/>
            <person name="Kasahara Y."/>
            <person name="Klaerr-Blanchard M."/>
            <person name="Klein C."/>
            <person name="Kobayashi Y."/>
            <person name="Koetter P."/>
            <person name="Koningstein G."/>
            <person name="Krogh S."/>
            <person name="Kumano M."/>
            <person name="Kurita K."/>
            <person name="Lapidus A."/>
            <person name="Lardinois S."/>
            <person name="Lauber J."/>
            <person name="Lazarevic V."/>
            <person name="Lee S.-M."/>
            <person name="Levine A."/>
            <person name="Liu H."/>
            <person name="Masuda S."/>
            <person name="Mauel C."/>
            <person name="Medigue C."/>
            <person name="Medina N."/>
            <person name="Mellado R.P."/>
            <person name="Mizuno M."/>
            <person name="Moestl D."/>
            <person name="Nakai S."/>
            <person name="Noback M."/>
            <person name="Noone D."/>
            <person name="O'Reilly M."/>
            <person name="Ogawa K."/>
            <person name="Ogiwara A."/>
            <person name="Oudega B."/>
            <person name="Park S.-H."/>
            <person name="Parro V."/>
            <person name="Pohl T.M."/>
            <person name="Portetelle D."/>
            <person name="Porwollik S."/>
            <person name="Prescott A.M."/>
            <person name="Presecan E."/>
            <person name="Pujic P."/>
            <person name="Purnelle B."/>
            <person name="Rapoport G."/>
            <person name="Rey M."/>
            <person name="Reynolds S."/>
            <person name="Rieger M."/>
            <person name="Rivolta C."/>
            <person name="Rocha E."/>
            <person name="Roche B."/>
            <person name="Rose M."/>
            <person name="Sadaie Y."/>
            <person name="Sato T."/>
            <person name="Scanlan E."/>
            <person name="Schleich S."/>
            <person name="Schroeter R."/>
            <person name="Scoffone F."/>
            <person name="Sekiguchi J."/>
            <person name="Sekowska A."/>
            <person name="Seror S.J."/>
            <person name="Serror P."/>
            <person name="Shin B.-S."/>
            <person name="Soldo B."/>
            <person name="Sorokin A."/>
            <person name="Tacconi E."/>
            <person name="Takagi T."/>
            <person name="Takahashi H."/>
            <person name="Takemaru K."/>
            <person name="Takeuchi M."/>
            <person name="Tamakoshi A."/>
            <person name="Tanaka T."/>
            <person name="Terpstra P."/>
            <person name="Tognoni A."/>
            <person name="Tosato V."/>
            <person name="Uchiyama S."/>
            <person name="Vandenbol M."/>
            <person name="Vannier F."/>
            <person name="Vassarotti A."/>
            <person name="Viari A."/>
            <person name="Wambutt R."/>
            <person name="Wedler E."/>
            <person name="Wedler H."/>
            <person name="Weitzenegger T."/>
            <person name="Winters P."/>
            <person name="Wipat A."/>
            <person name="Yamamoto H."/>
            <person name="Yamane K."/>
            <person name="Yasumoto K."/>
            <person name="Yata K."/>
            <person name="Yoshida K."/>
            <person name="Yoshikawa H.-F."/>
            <person name="Zumstein E."/>
            <person name="Yoshikawa H."/>
            <person name="Danchin A."/>
        </authorList>
    </citation>
    <scope>NUCLEOTIDE SEQUENCE [LARGE SCALE GENOMIC DNA]</scope>
    <source>
        <strain>168</strain>
    </source>
</reference>
<organism>
    <name type="scientific">Bacillus subtilis (strain 168)</name>
    <dbReference type="NCBI Taxonomy" id="224308"/>
    <lineage>
        <taxon>Bacteria</taxon>
        <taxon>Bacillati</taxon>
        <taxon>Bacillota</taxon>
        <taxon>Bacilli</taxon>
        <taxon>Bacillales</taxon>
        <taxon>Bacillaceae</taxon>
        <taxon>Bacillus</taxon>
    </lineage>
</organism>